<protein>
    <recommendedName>
        <fullName evidence="3">Peptide PGLa-R5</fullName>
    </recommendedName>
</protein>
<proteinExistence type="evidence at protein level"/>
<dbReference type="GO" id="GO:0005576">
    <property type="term" value="C:extracellular region"/>
    <property type="evidence" value="ECO:0007669"/>
    <property type="project" value="UniProtKB-SubCell"/>
</dbReference>
<dbReference type="GO" id="GO:0006952">
    <property type="term" value="P:defense response"/>
    <property type="evidence" value="ECO:0007669"/>
    <property type="project" value="UniProtKB-KW"/>
</dbReference>
<sequence>GMASTAGSVLGKLAKVAIGAL</sequence>
<evidence type="ECO:0000250" key="1">
    <source>
        <dbReference type="UniProtKB" id="C0HK87"/>
    </source>
</evidence>
<evidence type="ECO:0000269" key="2">
    <source>
    </source>
</evidence>
<evidence type="ECO:0000303" key="3">
    <source>
    </source>
</evidence>
<evidence type="ECO:0000305" key="4"/>
<evidence type="ECO:0000305" key="5">
    <source>
    </source>
</evidence>
<accession>C0HKP3</accession>
<keyword id="KW-0027">Amidation</keyword>
<keyword id="KW-0878">Amphibian defense peptide</keyword>
<keyword id="KW-0929">Antimicrobial</keyword>
<keyword id="KW-0903">Direct protein sequencing</keyword>
<keyword id="KW-0964">Secreted</keyword>
<comment type="function">
    <text evidence="1">Antimicrobial peptide.</text>
</comment>
<comment type="subcellular location">
    <subcellularLocation>
        <location evidence="2">Secreted</location>
    </subcellularLocation>
</comment>
<comment type="tissue specificity">
    <text evidence="5">Expressed by the skin glands.</text>
</comment>
<comment type="mass spectrometry"/>
<comment type="similarity">
    <text evidence="4">Belongs to the gastrin/cholecystokinin family. Magainin subfamily.</text>
</comment>
<reference evidence="4" key="1">
    <citation type="journal article" date="2016" name="Comp. Biochem. Physiol.">
        <title>Peptidomic analysis of the extensive array of host-defense peptides in skin secretions of the dodecaploid frog Xenopus ruwenzoriensis (Pipidae).</title>
        <authorList>
            <person name="Coquet L."/>
            <person name="Kolodziejek J."/>
            <person name="Jouenne T."/>
            <person name="Nowotny N."/>
            <person name="King J.D."/>
            <person name="Conlon J.M."/>
        </authorList>
    </citation>
    <scope>PROTEIN SEQUENCE</scope>
    <scope>SUBCELLULAR LOCATION</scope>
    <scope>MASS SPECTROMETRY</scope>
    <scope>AMIDATION AT LEU-21</scope>
    <source>
        <tissue evidence="3">Skin secretion</tissue>
    </source>
</reference>
<name>PGLR5_XENRU</name>
<organism evidence="3">
    <name type="scientific">Xenopus ruwenzoriensis</name>
    <name type="common">Uganda clawed frog</name>
    <dbReference type="NCBI Taxonomy" id="105430"/>
    <lineage>
        <taxon>Eukaryota</taxon>
        <taxon>Metazoa</taxon>
        <taxon>Chordata</taxon>
        <taxon>Craniata</taxon>
        <taxon>Vertebrata</taxon>
        <taxon>Euteleostomi</taxon>
        <taxon>Amphibia</taxon>
        <taxon>Batrachia</taxon>
        <taxon>Anura</taxon>
        <taxon>Pipoidea</taxon>
        <taxon>Pipidae</taxon>
        <taxon>Xenopodinae</taxon>
        <taxon>Xenopus</taxon>
        <taxon>Xenopus</taxon>
    </lineage>
</organism>
<feature type="peptide" id="PRO_0000440930" description="Peptide PGLa-R5" evidence="2">
    <location>
        <begin position="1"/>
        <end position="21"/>
    </location>
</feature>
<feature type="modified residue" description="Leucine amide" evidence="2">
    <location>
        <position position="21"/>
    </location>
</feature>